<gene>
    <name evidence="1" type="primary">lolD</name>
    <name type="ordered locus">Bcen_5964</name>
</gene>
<evidence type="ECO:0000255" key="1">
    <source>
        <dbReference type="HAMAP-Rule" id="MF_01708"/>
    </source>
</evidence>
<evidence type="ECO:0000256" key="2">
    <source>
        <dbReference type="SAM" id="MobiDB-lite"/>
    </source>
</evidence>
<organism>
    <name type="scientific">Burkholderia orbicola (strain AU 1054)</name>
    <dbReference type="NCBI Taxonomy" id="331271"/>
    <lineage>
        <taxon>Bacteria</taxon>
        <taxon>Pseudomonadati</taxon>
        <taxon>Pseudomonadota</taxon>
        <taxon>Betaproteobacteria</taxon>
        <taxon>Burkholderiales</taxon>
        <taxon>Burkholderiaceae</taxon>
        <taxon>Burkholderia</taxon>
        <taxon>Burkholderia cepacia complex</taxon>
        <taxon>Burkholderia orbicola</taxon>
    </lineage>
</organism>
<keyword id="KW-0067">ATP-binding</keyword>
<keyword id="KW-0997">Cell inner membrane</keyword>
<keyword id="KW-1003">Cell membrane</keyword>
<keyword id="KW-0472">Membrane</keyword>
<keyword id="KW-0547">Nucleotide-binding</keyword>
<keyword id="KW-1278">Translocase</keyword>
<keyword id="KW-0813">Transport</keyword>
<dbReference type="EC" id="7.6.2.-" evidence="1"/>
<dbReference type="EMBL" id="CP000380">
    <property type="protein sequence ID" value="ABF80829.1"/>
    <property type="molecule type" value="Genomic_DNA"/>
</dbReference>
<dbReference type="SMR" id="Q1BHS6"/>
<dbReference type="HOGENOM" id="CLU_000604_1_22_4"/>
<dbReference type="GO" id="GO:0005886">
    <property type="term" value="C:plasma membrane"/>
    <property type="evidence" value="ECO:0007669"/>
    <property type="project" value="UniProtKB-SubCell"/>
</dbReference>
<dbReference type="GO" id="GO:0005524">
    <property type="term" value="F:ATP binding"/>
    <property type="evidence" value="ECO:0007669"/>
    <property type="project" value="UniProtKB-KW"/>
</dbReference>
<dbReference type="GO" id="GO:0016887">
    <property type="term" value="F:ATP hydrolysis activity"/>
    <property type="evidence" value="ECO:0007669"/>
    <property type="project" value="InterPro"/>
</dbReference>
<dbReference type="GO" id="GO:0022857">
    <property type="term" value="F:transmembrane transporter activity"/>
    <property type="evidence" value="ECO:0007669"/>
    <property type="project" value="TreeGrafter"/>
</dbReference>
<dbReference type="GO" id="GO:0044874">
    <property type="term" value="P:lipoprotein localization to outer membrane"/>
    <property type="evidence" value="ECO:0007669"/>
    <property type="project" value="TreeGrafter"/>
</dbReference>
<dbReference type="GO" id="GO:0089705">
    <property type="term" value="P:protein localization to outer membrane"/>
    <property type="evidence" value="ECO:0007669"/>
    <property type="project" value="TreeGrafter"/>
</dbReference>
<dbReference type="CDD" id="cd03255">
    <property type="entry name" value="ABC_MJ0796_LolCDE_FtsE"/>
    <property type="match status" value="1"/>
</dbReference>
<dbReference type="FunFam" id="3.40.50.300:FF:000230">
    <property type="entry name" value="Lipoprotein-releasing system ATP-binding protein LolD"/>
    <property type="match status" value="1"/>
</dbReference>
<dbReference type="Gene3D" id="3.40.50.300">
    <property type="entry name" value="P-loop containing nucleotide triphosphate hydrolases"/>
    <property type="match status" value="1"/>
</dbReference>
<dbReference type="InterPro" id="IPR003593">
    <property type="entry name" value="AAA+_ATPase"/>
</dbReference>
<dbReference type="InterPro" id="IPR003439">
    <property type="entry name" value="ABC_transporter-like_ATP-bd"/>
</dbReference>
<dbReference type="InterPro" id="IPR017871">
    <property type="entry name" value="ABC_transporter-like_CS"/>
</dbReference>
<dbReference type="InterPro" id="IPR015854">
    <property type="entry name" value="ABC_transpr_LolD-like"/>
</dbReference>
<dbReference type="InterPro" id="IPR011924">
    <property type="entry name" value="LolD_lipo_ATP-bd"/>
</dbReference>
<dbReference type="InterPro" id="IPR017911">
    <property type="entry name" value="MacB-like_ATP-bd"/>
</dbReference>
<dbReference type="InterPro" id="IPR027417">
    <property type="entry name" value="P-loop_NTPase"/>
</dbReference>
<dbReference type="NCBIfam" id="TIGR02211">
    <property type="entry name" value="LolD_lipo_ex"/>
    <property type="match status" value="1"/>
</dbReference>
<dbReference type="PANTHER" id="PTHR24220">
    <property type="entry name" value="IMPORT ATP-BINDING PROTEIN"/>
    <property type="match status" value="1"/>
</dbReference>
<dbReference type="PANTHER" id="PTHR24220:SF689">
    <property type="entry name" value="LIPOPROTEIN-RELEASING SYSTEM ATP-BINDING PROTEIN LOLD"/>
    <property type="match status" value="1"/>
</dbReference>
<dbReference type="Pfam" id="PF00005">
    <property type="entry name" value="ABC_tran"/>
    <property type="match status" value="1"/>
</dbReference>
<dbReference type="SMART" id="SM00382">
    <property type="entry name" value="AAA"/>
    <property type="match status" value="1"/>
</dbReference>
<dbReference type="SUPFAM" id="SSF52540">
    <property type="entry name" value="P-loop containing nucleoside triphosphate hydrolases"/>
    <property type="match status" value="1"/>
</dbReference>
<dbReference type="PROSITE" id="PS00211">
    <property type="entry name" value="ABC_TRANSPORTER_1"/>
    <property type="match status" value="1"/>
</dbReference>
<dbReference type="PROSITE" id="PS50893">
    <property type="entry name" value="ABC_TRANSPORTER_2"/>
    <property type="match status" value="1"/>
</dbReference>
<dbReference type="PROSITE" id="PS51244">
    <property type="entry name" value="LOLD"/>
    <property type="match status" value="1"/>
</dbReference>
<feature type="chain" id="PRO_0000272063" description="Lipoprotein-releasing system ATP-binding protein LolD">
    <location>
        <begin position="1"/>
        <end position="253"/>
    </location>
</feature>
<feature type="domain" description="ABC transporter" evidence="1">
    <location>
        <begin position="28"/>
        <end position="253"/>
    </location>
</feature>
<feature type="region of interest" description="Disordered" evidence="2">
    <location>
        <begin position="1"/>
        <end position="20"/>
    </location>
</feature>
<feature type="binding site" evidence="1">
    <location>
        <begin position="64"/>
        <end position="71"/>
    </location>
    <ligand>
        <name>ATP</name>
        <dbReference type="ChEBI" id="CHEBI:30616"/>
    </ligand>
</feature>
<comment type="function">
    <text evidence="1">Part of the ABC transporter complex LolCDE involved in the translocation of mature outer membrane-directed lipoproteins, from the inner membrane to the periplasmic chaperone, LolA. Responsible for the formation of the LolA-lipoprotein complex in an ATP-dependent manner.</text>
</comment>
<comment type="subunit">
    <text evidence="1">The complex is composed of two ATP-binding proteins (LolD) and two transmembrane proteins (LolC and LolE).</text>
</comment>
<comment type="subcellular location">
    <subcellularLocation>
        <location evidence="1">Cell inner membrane</location>
        <topology evidence="1">Peripheral membrane protein</topology>
    </subcellularLocation>
</comment>
<comment type="similarity">
    <text evidence="1">Belongs to the ABC transporter superfamily. Lipoprotein translocase (TC 3.A.1.125) family.</text>
</comment>
<name>LOLD_BURO1</name>
<protein>
    <recommendedName>
        <fullName evidence="1">Lipoprotein-releasing system ATP-binding protein LolD</fullName>
        <ecNumber evidence="1">7.6.2.-</ecNumber>
    </recommendedName>
</protein>
<reference key="1">
    <citation type="submission" date="2006-05" db="EMBL/GenBank/DDBJ databases">
        <title>Complete sequence of chromosome 3 of Burkholderia cenocepacia AU 1054.</title>
        <authorList>
            <consortium name="US DOE Joint Genome Institute"/>
            <person name="Copeland A."/>
            <person name="Lucas S."/>
            <person name="Lapidus A."/>
            <person name="Barry K."/>
            <person name="Detter J.C."/>
            <person name="Glavina del Rio T."/>
            <person name="Hammon N."/>
            <person name="Israni S."/>
            <person name="Dalin E."/>
            <person name="Tice H."/>
            <person name="Pitluck S."/>
            <person name="Chain P."/>
            <person name="Malfatti S."/>
            <person name="Shin M."/>
            <person name="Vergez L."/>
            <person name="Schmutz J."/>
            <person name="Larimer F."/>
            <person name="Land M."/>
            <person name="Hauser L."/>
            <person name="Kyrpides N."/>
            <person name="Lykidis A."/>
            <person name="LiPuma J.J."/>
            <person name="Konstantinidis K."/>
            <person name="Tiedje J.M."/>
            <person name="Richardson P."/>
        </authorList>
    </citation>
    <scope>NUCLEOTIDE SEQUENCE [LARGE SCALE GENOMIC DNA]</scope>
    <source>
        <strain>AU 1054</strain>
    </source>
</reference>
<accession>Q1BHS6</accession>
<proteinExistence type="inferred from homology"/>
<sequence length="253" mass="27759">MNDRAAAFADSRQQHNRQDSAGMQEYVLQARGITKAFVQGGFNVQVLNNTELTVRRGEKLAVVGASGSGKSTLLHVLGGLDEPSAGEVSLLGKPFTQLAERERNELRNRALGFVYQFHHLLPEFTALDNVAMPLRIRRMTTEDAREQAQAMLERVGLGPRAKHRPGELSGGERQRVAIARALVTKPACVLADEPTGNLDGTTADTVFNLMLELSETLETSFVIVTHDPDLAARCDRIMRLRDGVLHEEPALPV</sequence>